<gene>
    <name type="primary">MT-CYB</name>
    <name type="synonym">COB</name>
    <name type="synonym">CYTB</name>
    <name type="synonym">MTCYB</name>
</gene>
<dbReference type="EMBL" id="AY321638">
    <property type="protein sequence ID" value="AAQ83999.1"/>
    <property type="molecule type" value="Genomic_DNA"/>
</dbReference>
<dbReference type="EMBL" id="AY321639">
    <property type="protein sequence ID" value="AAQ84000.1"/>
    <property type="molecule type" value="Genomic_DNA"/>
</dbReference>
<dbReference type="EMBL" id="AY321640">
    <property type="protein sequence ID" value="AAQ84001.1"/>
    <property type="molecule type" value="Genomic_DNA"/>
</dbReference>
<dbReference type="EMBL" id="AY321641">
    <property type="protein sequence ID" value="AAQ84002.1"/>
    <property type="molecule type" value="Genomic_DNA"/>
</dbReference>
<dbReference type="EMBL" id="AY321642">
    <property type="protein sequence ID" value="AAQ84003.1"/>
    <property type="molecule type" value="Genomic_DNA"/>
</dbReference>
<dbReference type="EMBL" id="AY321643">
    <property type="protein sequence ID" value="AAQ84004.1"/>
    <property type="molecule type" value="Genomic_DNA"/>
</dbReference>
<dbReference type="EMBL" id="AY321644">
    <property type="protein sequence ID" value="AAQ84005.1"/>
    <property type="molecule type" value="Genomic_DNA"/>
</dbReference>
<dbReference type="EMBL" id="AY321645">
    <property type="protein sequence ID" value="AAQ84006.1"/>
    <property type="molecule type" value="Genomic_DNA"/>
</dbReference>
<dbReference type="SMR" id="Q4VWH4"/>
<dbReference type="GO" id="GO:0005743">
    <property type="term" value="C:mitochondrial inner membrane"/>
    <property type="evidence" value="ECO:0007669"/>
    <property type="project" value="UniProtKB-SubCell"/>
</dbReference>
<dbReference type="GO" id="GO:0045275">
    <property type="term" value="C:respiratory chain complex III"/>
    <property type="evidence" value="ECO:0007669"/>
    <property type="project" value="InterPro"/>
</dbReference>
<dbReference type="GO" id="GO:0046872">
    <property type="term" value="F:metal ion binding"/>
    <property type="evidence" value="ECO:0007669"/>
    <property type="project" value="UniProtKB-KW"/>
</dbReference>
<dbReference type="GO" id="GO:0008121">
    <property type="term" value="F:ubiquinol-cytochrome-c reductase activity"/>
    <property type="evidence" value="ECO:0007669"/>
    <property type="project" value="InterPro"/>
</dbReference>
<dbReference type="GO" id="GO:0006122">
    <property type="term" value="P:mitochondrial electron transport, ubiquinol to cytochrome c"/>
    <property type="evidence" value="ECO:0007669"/>
    <property type="project" value="TreeGrafter"/>
</dbReference>
<dbReference type="CDD" id="cd00290">
    <property type="entry name" value="cytochrome_b_C"/>
    <property type="match status" value="1"/>
</dbReference>
<dbReference type="CDD" id="cd00284">
    <property type="entry name" value="Cytochrome_b_N"/>
    <property type="match status" value="1"/>
</dbReference>
<dbReference type="FunFam" id="1.20.810.10:FF:000002">
    <property type="entry name" value="Cytochrome b"/>
    <property type="match status" value="1"/>
</dbReference>
<dbReference type="Gene3D" id="1.20.810.10">
    <property type="entry name" value="Cytochrome Bc1 Complex, Chain C"/>
    <property type="match status" value="1"/>
</dbReference>
<dbReference type="InterPro" id="IPR005798">
    <property type="entry name" value="Cyt_b/b6_C"/>
</dbReference>
<dbReference type="InterPro" id="IPR036150">
    <property type="entry name" value="Cyt_b/b6_C_sf"/>
</dbReference>
<dbReference type="InterPro" id="IPR005797">
    <property type="entry name" value="Cyt_b/b6_N"/>
</dbReference>
<dbReference type="InterPro" id="IPR027387">
    <property type="entry name" value="Cytb/b6-like_sf"/>
</dbReference>
<dbReference type="InterPro" id="IPR030689">
    <property type="entry name" value="Cytochrome_b"/>
</dbReference>
<dbReference type="InterPro" id="IPR048260">
    <property type="entry name" value="Cytochrome_b_C_euk/bac"/>
</dbReference>
<dbReference type="InterPro" id="IPR048259">
    <property type="entry name" value="Cytochrome_b_N_euk/bac"/>
</dbReference>
<dbReference type="InterPro" id="IPR016174">
    <property type="entry name" value="Di-haem_cyt_TM"/>
</dbReference>
<dbReference type="PANTHER" id="PTHR19271">
    <property type="entry name" value="CYTOCHROME B"/>
    <property type="match status" value="1"/>
</dbReference>
<dbReference type="PANTHER" id="PTHR19271:SF16">
    <property type="entry name" value="CYTOCHROME B"/>
    <property type="match status" value="1"/>
</dbReference>
<dbReference type="Pfam" id="PF00032">
    <property type="entry name" value="Cytochrom_B_C"/>
    <property type="match status" value="1"/>
</dbReference>
<dbReference type="Pfam" id="PF00033">
    <property type="entry name" value="Cytochrome_B"/>
    <property type="match status" value="1"/>
</dbReference>
<dbReference type="PIRSF" id="PIRSF038885">
    <property type="entry name" value="COB"/>
    <property type="match status" value="1"/>
</dbReference>
<dbReference type="SUPFAM" id="SSF81648">
    <property type="entry name" value="a domain/subunit of cytochrome bc1 complex (Ubiquinol-cytochrome c reductase)"/>
    <property type="match status" value="1"/>
</dbReference>
<dbReference type="SUPFAM" id="SSF81342">
    <property type="entry name" value="Transmembrane di-heme cytochromes"/>
    <property type="match status" value="1"/>
</dbReference>
<dbReference type="PROSITE" id="PS51003">
    <property type="entry name" value="CYTB_CTER"/>
    <property type="match status" value="1"/>
</dbReference>
<dbReference type="PROSITE" id="PS51002">
    <property type="entry name" value="CYTB_NTER"/>
    <property type="match status" value="1"/>
</dbReference>
<feature type="chain" id="PRO_0000254873" description="Cytochrome b">
    <location>
        <begin position="1"/>
        <end position="379"/>
    </location>
</feature>
<feature type="transmembrane region" description="Helical" evidence="2">
    <location>
        <begin position="33"/>
        <end position="53"/>
    </location>
</feature>
<feature type="transmembrane region" description="Helical" evidence="2">
    <location>
        <begin position="77"/>
        <end position="98"/>
    </location>
</feature>
<feature type="transmembrane region" description="Helical" evidence="2">
    <location>
        <begin position="113"/>
        <end position="133"/>
    </location>
</feature>
<feature type="transmembrane region" description="Helical" evidence="2">
    <location>
        <begin position="178"/>
        <end position="198"/>
    </location>
</feature>
<feature type="transmembrane region" description="Helical" evidence="2">
    <location>
        <begin position="226"/>
        <end position="246"/>
    </location>
</feature>
<feature type="transmembrane region" description="Helical" evidence="2">
    <location>
        <begin position="288"/>
        <end position="308"/>
    </location>
</feature>
<feature type="transmembrane region" description="Helical" evidence="2">
    <location>
        <begin position="320"/>
        <end position="340"/>
    </location>
</feature>
<feature type="transmembrane region" description="Helical" evidence="2">
    <location>
        <begin position="347"/>
        <end position="367"/>
    </location>
</feature>
<feature type="binding site" description="axial binding residue" evidence="2">
    <location>
        <position position="83"/>
    </location>
    <ligand>
        <name>heme b</name>
        <dbReference type="ChEBI" id="CHEBI:60344"/>
        <label>b562</label>
    </ligand>
    <ligandPart>
        <name>Fe</name>
        <dbReference type="ChEBI" id="CHEBI:18248"/>
    </ligandPart>
</feature>
<feature type="binding site" description="axial binding residue" evidence="2">
    <location>
        <position position="97"/>
    </location>
    <ligand>
        <name>heme b</name>
        <dbReference type="ChEBI" id="CHEBI:60344"/>
        <label>b566</label>
    </ligand>
    <ligandPart>
        <name>Fe</name>
        <dbReference type="ChEBI" id="CHEBI:18248"/>
    </ligandPart>
</feature>
<feature type="binding site" description="axial binding residue" evidence="2">
    <location>
        <position position="182"/>
    </location>
    <ligand>
        <name>heme b</name>
        <dbReference type="ChEBI" id="CHEBI:60344"/>
        <label>b562</label>
    </ligand>
    <ligandPart>
        <name>Fe</name>
        <dbReference type="ChEBI" id="CHEBI:18248"/>
    </ligandPart>
</feature>
<feature type="binding site" description="axial binding residue" evidence="2">
    <location>
        <position position="196"/>
    </location>
    <ligand>
        <name>heme b</name>
        <dbReference type="ChEBI" id="CHEBI:60344"/>
        <label>b566</label>
    </ligand>
    <ligandPart>
        <name>Fe</name>
        <dbReference type="ChEBI" id="CHEBI:18248"/>
    </ligandPart>
</feature>
<feature type="binding site" evidence="2">
    <location>
        <position position="201"/>
    </location>
    <ligand>
        <name>a ubiquinone</name>
        <dbReference type="ChEBI" id="CHEBI:16389"/>
    </ligand>
</feature>
<keyword id="KW-0249">Electron transport</keyword>
<keyword id="KW-0349">Heme</keyword>
<keyword id="KW-0408">Iron</keyword>
<keyword id="KW-0472">Membrane</keyword>
<keyword id="KW-0479">Metal-binding</keyword>
<keyword id="KW-0496">Mitochondrion</keyword>
<keyword id="KW-0999">Mitochondrion inner membrane</keyword>
<keyword id="KW-0679">Respiratory chain</keyword>
<keyword id="KW-0812">Transmembrane</keyword>
<keyword id="KW-1133">Transmembrane helix</keyword>
<keyword id="KW-0813">Transport</keyword>
<keyword id="KW-0830">Ubiquinone</keyword>
<accession>Q4VWH4</accession>
<name>CYB_TUPGL</name>
<evidence type="ECO:0000250" key="1"/>
<evidence type="ECO:0000250" key="2">
    <source>
        <dbReference type="UniProtKB" id="P00157"/>
    </source>
</evidence>
<evidence type="ECO:0000255" key="3">
    <source>
        <dbReference type="PROSITE-ProRule" id="PRU00967"/>
    </source>
</evidence>
<evidence type="ECO:0000255" key="4">
    <source>
        <dbReference type="PROSITE-ProRule" id="PRU00968"/>
    </source>
</evidence>
<reference key="1">
    <citation type="submission" date="2003-06" db="EMBL/GenBank/DDBJ databases">
        <title>Phylogenetic diversification and taxonomic status of the Tupaia glis species complex based on cytochrome-b sequence variation.</title>
        <authorList>
            <person name="Han K.H."/>
            <person name="Sheldon F.H."/>
            <person name="Stuebing R.B."/>
        </authorList>
    </citation>
    <scope>NUCLEOTIDE SEQUENCE [GENOMIC DNA]</scope>
    <source>
        <strain>Isolate TTglis4994</strain>
        <strain>Isolate TTglis4995</strain>
        <strain>Isolate TTglis4996</strain>
        <strain>Isolate TTglis5067</strain>
        <strain>Isolate TTglis5069</strain>
        <strain>Isolate TTglis5070</strain>
        <strain>Isolate TTglis5071</strain>
        <strain>Isolate TTglis5072</strain>
    </source>
</reference>
<sequence>MTNMRKKHPLLKIINHSFIDLPAPSNISSWWNFGSLLGMCLVLQIITGLFLAMHYTADTTTAFSSVTHICRDVNYGWVIRYLHANGASMFFMCLFLHVGRGLYYGSYLYLETWNIGVILLFATMATAFMGYVLPWGQMSFWGATVITNLLSAIPYIGTDLVEWIWGGFSVDKATLTRFFAFHFILPFIITALVLVHLLFLHETGSNNPLGIISDADKIPFHPYYTIKDILGVVALLTVLSSLVLFSPDLLGDPDNYTPANPLNTPPHIKPEWYFLFAYAILRSIPNKLGGVLALVMSILILMFVPFLHTSKQRSMTFRPISQCLFWILVADLITLTWIGGQPVEHPFIIIGQVASILYFTIIIILMPLAGWLENYLMKW</sequence>
<proteinExistence type="inferred from homology"/>
<protein>
    <recommendedName>
        <fullName>Cytochrome b</fullName>
    </recommendedName>
    <alternativeName>
        <fullName>Complex III subunit 3</fullName>
    </alternativeName>
    <alternativeName>
        <fullName>Complex III subunit III</fullName>
    </alternativeName>
    <alternativeName>
        <fullName>Cytochrome b-c1 complex subunit 3</fullName>
    </alternativeName>
    <alternativeName>
        <fullName>Ubiquinol-cytochrome-c reductase complex cytochrome b subunit</fullName>
    </alternativeName>
</protein>
<organism>
    <name type="scientific">Tupaia glis</name>
    <name type="common">Common tree shrew</name>
    <name type="synonym">Sorex glis</name>
    <dbReference type="NCBI Taxonomy" id="9395"/>
    <lineage>
        <taxon>Eukaryota</taxon>
        <taxon>Metazoa</taxon>
        <taxon>Chordata</taxon>
        <taxon>Craniata</taxon>
        <taxon>Vertebrata</taxon>
        <taxon>Euteleostomi</taxon>
        <taxon>Mammalia</taxon>
        <taxon>Eutheria</taxon>
        <taxon>Euarchontoglires</taxon>
        <taxon>Scandentia</taxon>
        <taxon>Tupaiidae</taxon>
        <taxon>Tupaia</taxon>
    </lineage>
</organism>
<comment type="function">
    <text evidence="2">Component of the ubiquinol-cytochrome c reductase complex (complex III or cytochrome b-c1 complex) that is part of the mitochondrial respiratory chain. The b-c1 complex mediates electron transfer from ubiquinol to cytochrome c. Contributes to the generation of a proton gradient across the mitochondrial membrane that is then used for ATP synthesis.</text>
</comment>
<comment type="cofactor">
    <cofactor evidence="2">
        <name>heme b</name>
        <dbReference type="ChEBI" id="CHEBI:60344"/>
    </cofactor>
    <text evidence="2">Binds 2 heme b groups non-covalently.</text>
</comment>
<comment type="subunit">
    <text evidence="2">The cytochrome bc1 complex contains 11 subunits: 3 respiratory subunits (MT-CYB, CYC1 and UQCRFS1), 2 core proteins (UQCRC1 and UQCRC2) and 6 low-molecular weight proteins (UQCRH/QCR6, UQCRB/QCR7, UQCRQ/QCR8, UQCR10/QCR9, UQCR11/QCR10 and a cleavage product of UQCRFS1). This cytochrome bc1 complex then forms a dimer.</text>
</comment>
<comment type="subcellular location">
    <subcellularLocation>
        <location evidence="2">Mitochondrion inner membrane</location>
        <topology evidence="2">Multi-pass membrane protein</topology>
    </subcellularLocation>
</comment>
<comment type="miscellaneous">
    <text evidence="1">Heme 1 (or BL or b562) is low-potential and absorbs at about 562 nm, and heme 2 (or BH or b566) is high-potential and absorbs at about 566 nm.</text>
</comment>
<comment type="similarity">
    <text evidence="3 4">Belongs to the cytochrome b family.</text>
</comment>
<comment type="caution">
    <text evidence="2">The full-length protein contains only eight transmembrane helices, not nine as predicted by bioinformatics tools.</text>
</comment>
<geneLocation type="mitochondrion"/>